<comment type="function">
    <text evidence="1 3 7 8 9 14 15 16 19 20">Capable of inducing cell cycle arrest in G1 and G2 phases (PubMed:8521522, PubMed:9393858). Acts as a tumor suppressor (PubMed:15601844, PubMed:17936562, PubMed:8521522, PubMed:9393858). Binds to MDM2 and blocks its nucleocytoplasmic shuttling by sequestering it in the nucleolus (PubMed:10359817, PubMed:9529248). This inhibits the oncogenic action of MDM2 by blocking MDM2-induced degradation of p53 and enhancing p53-dependent transactivation and apoptosis (PubMed:10359817). Also induces G2 arrest and apoptosis in a p53-independent manner by preventing the activation of cyclin B1/CDC2 complexes (PubMed:15361884). Binds to BCL6 and down-regulates BCL6-induced transcriptional repression (PubMed:15567177). Binds to E2F1 and MYC and blocks their transcriptional activator activity but has no effect on MYC transcriptional repression (By similarity). Binds to TOP1/TOPOI and stimulates its activity (By similarity). This complex binds to rRNA gene promoters and may play a role in rRNA transcription and/or maturation (By similarity). Interacts with NPM1/B23 and promotes its polyubiquitination and degradation, thus inhibiting rRNA processing (By similarity). Plays a role in inhibiting ribosome biogenesis, perhaps by binding to the nucleolar localization sequence of transcription termination factor TTF1, and thereby preventing nucleolar localization of TTF1 (PubMed:20513429). Interacts with COMMD1 and promotes its 'Lys63'-linked polyubiquitination (By similarity). Interacts with UBE2I/UBC9 and enhances sumoylation of a number of its binding partners including MDM2 and E2F1 (By similarity). Binds to HUWE1 and represses its ubiquitin ligase activity (By similarity). May play a role in controlling cell proliferation and apoptosis during mammary gland development (By similarity).</text>
</comment>
<comment type="function">
    <molecule>Isoform smARF</molecule>
    <text evidence="10">May be involved in regulation of autophagy and caspase-independent cell death; the short-lived mitochondrial isoform is stabilized by C1QBP.</text>
</comment>
<comment type="subunit">
    <text evidence="1 5 7 8 11 12 20">Does not interact with cyclins, CDK1, CDK2, CDK4, CDK5 or CDK6. Interacts with COMMD1 (By similarity). Binds to BCL6, E2F1, HUWE1, MDM2, MYC, NPM1/B23, TOP1/TOPOI and UBE2I/UBC9. Interacts with TBRG1. Interacts with CDKN2AIP and E4F1. Interacts with CDK5RAP3 and MDM2; form a ternary complex involved in regulation of p53/TP53. Interacts with NOP53; the interaction is direct and promotes ARF nucleoplasmic relocalization and ubiquitin-mediated proteasomal degradation (By similarity). Interacts with TTF1 (via the N-terminal region (NRD) and a C-terminal region); the interaction is direct and inhibits the nucleolar localization of TTF1 (PubMed:20513429).</text>
</comment>
<comment type="subunit">
    <molecule>Isoform smARF</molecule>
    <text evidence="10">Interacts with C1QBP.</text>
</comment>
<comment type="interaction">
    <interactant intactId="EBI-1202287">
        <id>Q64364</id>
    </interactant>
    <interactant intactId="EBI-1216353">
        <id>Q8K4B0</id>
        <label>Mta1</label>
    </interactant>
    <organismsDiffer>false</organismsDiffer>
    <experiments>2</experiments>
</comment>
<comment type="interaction">
    <interactant intactId="EBI-1202287">
        <id>Q64364</id>
    </interactant>
    <interactant intactId="EBI-347528">
        <id>Q07021</id>
        <label>C1QBP</label>
    </interactant>
    <organismsDiffer>true</organismsDiffer>
    <experiments>4</experiments>
</comment>
<comment type="interaction">
    <interactant intactId="EBI-1202287">
        <id>Q64364</id>
    </interactant>
    <interactant intactId="EBI-78579">
        <id>P06748</id>
        <label>NPM1</label>
    </interactant>
    <organismsDiffer>true</organismsDiffer>
    <experiments>2</experiments>
</comment>
<comment type="interaction">
    <interactant intactId="EBI-1202306">
        <id>Q64364-1</id>
    </interactant>
    <interactant intactId="EBI-1810767">
        <id>Q8VCI5</id>
        <label>Pex19</label>
    </interactant>
    <organismsDiffer>false</organismsDiffer>
    <experiments>4</experiments>
</comment>
<comment type="subcellular location">
    <subcellularLocation>
        <location evidence="1 3 8 9 16 24">Nucleus</location>
        <location evidence="1 3 8 9 16 24">Nucleolus</location>
    </subcellularLocation>
    <subcellularLocation>
        <location evidence="1 24">Nucleus</location>
        <location evidence="1 24">Nucleoplasm</location>
    </subcellularLocation>
</comment>
<comment type="subcellular location">
    <molecule>Isoform smARF</molecule>
    <subcellularLocation>
        <location evidence="10">Mitochondrion</location>
    </subcellularLocation>
</comment>
<comment type="alternative products">
    <event type="alternative splicing"/>
    <isoform>
        <id>Q64364-1</id>
        <name evidence="21">tumor suppressor ARF</name>
        <name evidence="22">p19ARF</name>
        <sequence type="displayed"/>
    </isoform>
    <isoform>
        <id>P51480-1</id>
        <name evidence="23">1</name>
        <name evidence="23">p16INK4a</name>
        <sequence type="external"/>
    </isoform>
    <isoform>
        <id>P51480-2</id>
        <name evidence="23">2</name>
        <sequence type="external"/>
    </isoform>
    <isoform>
        <id>Q64364-2</id>
        <name>smARF</name>
        <sequence type="described" ref="VSP_044963"/>
    </isoform>
    <text evidence="16">Isoform 1 and isoform tumor suppressor ARF arise due to the use of two alternative first exons joined to a common exon 2 at the same acceptor site but in different reading frames, resulting in two completely different isoforms.</text>
</comment>
<comment type="developmental stage">
    <text evidence="6">Not detected in 12-week virgin mammary glands. Expression increases (at protein level) six-fold during pregnancy and remains at this level during lactation. During involution, a slight increase is observed at days 2 and 8 followed by a sharp decline at day 15.</text>
</comment>
<comment type="induction">
    <text evidence="4 6 9 13">By progesterone. Induced by activated Ras, and this requires DMTF1. Repressed by non-classical inhibitors of NF-kappa-B signaling such as doxorubicin, daunorubicin and UVC, and by the NF-kappa-B p65 subunit (RELA).</text>
</comment>
<comment type="PTM">
    <text evidence="1">Ubiquitinated in normal cells by TRIP12 via the ubiquitin fusion degradation (UFD) pathway, a process that mediates ubiquitination at the N-terminus, regardless of the absence of lysine residues. Ubiquitination leads to its proteasomal degradation. In cancer cells, however, TRIP12 is located in a different cell compartment, preventing ubiquitination and degradation.</text>
</comment>
<comment type="disruption phenotype">
    <text evidence="6">Mice lacking isoform tumor suppressor ARF of Cdkn2a display delayed mammary gland involution.</text>
</comment>
<comment type="caution">
    <text evidence="23">The proteins described here are encoded by the gene CDKN2A, but are completely unrelated in terms of sequence and function to cyclin-dependent kinase inhibitor 2A (AC P51480) which is encoded by the same gene.</text>
</comment>
<keyword id="KW-0002">3D-structure</keyword>
<keyword id="KW-0025">Alternative splicing</keyword>
<keyword id="KW-0053">Apoptosis</keyword>
<keyword id="KW-0131">Cell cycle</keyword>
<keyword id="KW-0238">DNA-binding</keyword>
<keyword id="KW-0496">Mitochondrion</keyword>
<keyword id="KW-0539">Nucleus</keyword>
<keyword id="KW-1185">Reference proteome</keyword>
<keyword id="KW-0698">rRNA processing</keyword>
<keyword id="KW-0804">Transcription</keyword>
<keyword id="KW-0805">Transcription regulation</keyword>
<keyword id="KW-0043">Tumor suppressor</keyword>
<keyword id="KW-0832">Ubl conjugation</keyword>
<keyword id="KW-0833">Ubl conjugation pathway</keyword>
<name>ARF_MOUSE</name>
<gene>
    <name evidence="25 30" type="primary">Cdkn2a</name>
</gene>
<feature type="chain" id="PRO_0000144182" description="Tumor suppressor ARF">
    <location>
        <begin position="1"/>
        <end position="169"/>
    </location>
</feature>
<feature type="region of interest" description="Interaction with CDK5RAP3 and MDM2" evidence="1">
    <location>
        <begin position="1"/>
        <end position="63"/>
    </location>
</feature>
<feature type="region of interest" description="Disordered" evidence="2">
    <location>
        <begin position="54"/>
        <end position="73"/>
    </location>
</feature>
<feature type="splice variant" id="VSP_044963" description="In isoform smARF." evidence="23">
    <location>
        <begin position="1"/>
        <end position="44"/>
    </location>
</feature>
<feature type="mutagenesis site" description="No effect on activity." evidence="17">
    <original>L</original>
    <variation>P</variation>
    <variation>R</variation>
    <location>
        <position position="85"/>
    </location>
</feature>
<feature type="mutagenesis site" description="No effect on activity." evidence="17">
    <original>P</original>
    <variation>S</variation>
    <location>
        <position position="93"/>
    </location>
</feature>
<feature type="mutagenesis site" description="No effect on activity." evidence="17">
    <original>R</original>
    <variation>Q</variation>
    <location>
        <position position="97"/>
    </location>
</feature>
<feature type="mutagenesis site" description="No effect on activity." evidence="17">
    <location>
        <begin position="105"/>
        <end position="106"/>
    </location>
</feature>
<feature type="mutagenesis site" description="No effect on activity." evidence="17">
    <original>A</original>
    <variation>T</variation>
    <location>
        <position position="120"/>
    </location>
</feature>
<feature type="helix" evidence="31">
    <location>
        <begin position="4"/>
        <end position="14"/>
    </location>
</feature>
<feature type="helix" evidence="31">
    <location>
        <begin position="20"/>
        <end position="29"/>
    </location>
</feature>
<protein>
    <recommendedName>
        <fullName evidence="23">Tumor suppressor ARF</fullName>
    </recommendedName>
    <alternativeName>
        <fullName>Alternative reading frame</fullName>
        <shortName>ARF</shortName>
    </alternativeName>
    <alternativeName>
        <fullName>Cyclin-dependent kinase inhibitor 2A</fullName>
    </alternativeName>
    <alternativeName>
        <fullName>p19ARF</fullName>
    </alternativeName>
</protein>
<sequence>MGRRFLVTVRIQRAGRPLQERVFLVKFVRSRRPRTASCALAFVNMLLRLERILRRGPHRNPGPGDDDGQRSRSSSSAQLRCRFELRGPHYLLPPGARRSAGRLPGHAGGAARVRGSAGCARCLGSPAARLGPRAGTSRHRAIFAFRWVLFVFRWVVFVYRWERRPDRRA</sequence>
<accession>Q64364</accession>
<accession>Q4U255</accession>
<accession>Q9QXC7</accession>
<accession>Q9R051</accession>
<reference evidence="23 25" key="1">
    <citation type="journal article" date="1995" name="Cell">
        <title>Alternative reading frames of the INK4a tumor suppressor gene encode two unrelated proteins capable of inducing cell cycle arrest.</title>
        <authorList>
            <person name="Quelle D.E."/>
            <person name="Zindy F."/>
            <person name="Ashmun R.A."/>
            <person name="Sherr C.J."/>
        </authorList>
    </citation>
    <scope>NUCLEOTIDE SEQUENCE [MRNA]</scope>
    <scope>FUNCTION</scope>
    <scope>SUBCELLULAR LOCATION</scope>
</reference>
<reference key="2">
    <citation type="journal article" date="2004" name="Genome Res.">
        <title>The status, quality, and expansion of the NIH full-length cDNA project: the Mammalian Gene Collection (MGC).</title>
        <authorList>
            <consortium name="The MGC Project Team"/>
        </authorList>
    </citation>
    <scope>NUCLEOTIDE SEQUENCE [LARGE SCALE MRNA]</scope>
    <source>
        <strain>NMRI</strain>
        <tissue>Mammary tumor</tissue>
    </source>
</reference>
<reference evidence="23 29" key="3">
    <citation type="journal article" date="2000" name="Carcinogenesis">
        <title>Characterization of the murine p19ARF promoter CpG island and its methylation pattern in primary lymphomas.</title>
        <authorList>
            <person name="Melendez B."/>
            <person name="Malumbres M."/>
            <person name="de Castro I.P."/>
            <person name="Santos J."/>
            <person name="Pellicer A."/>
            <person name="Fernandez-Piqueras J."/>
        </authorList>
    </citation>
    <scope>NUCLEOTIDE SEQUENCE [GENOMIC DNA] OF 1-64</scope>
    <source>
        <strain evidence="29">129/SvJ</strain>
    </source>
</reference>
<reference evidence="23 26" key="4">
    <citation type="journal article" date="1997" name="Mamm. Genome">
        <title>Sequence variation and chromosomal mapping of the murine Cdkn2a tumor suppressor gene.</title>
        <authorList>
            <person name="Herzog C.R."/>
            <person name="You M."/>
        </authorList>
    </citation>
    <scope>NUCLEOTIDE SEQUENCE [GENOMIC DNA] OF 1-63</scope>
    <source>
        <strain evidence="18">020</strain>
        <strain evidence="27">129/J</strain>
        <strain evidence="27">A/J</strain>
        <strain evidence="27">A/Wy</strain>
        <strain evidence="27">AKR/J</strain>
        <strain evidence="27">B10.A</strain>
        <strain evidence="27">B10.D2(58N)</strain>
        <strain evidence="18">BALB/cJ</strain>
        <strain evidence="18">C3H/21BG</strain>
        <strain evidence="18">C3H/HeJ</strain>
        <strain evidence="27">C57BL/10ScNJ</strain>
        <strain evidence="27">C57BL/10SN</strain>
        <strain evidence="27">C57BL/6By</strain>
        <strain evidence="18">C57BL/6J</strain>
        <strain evidence="27">C57BR/cdJ</strain>
        <strain evidence="18">CBA/J</strain>
        <strain evidence="27">DBA/2J</strain>
        <strain evidence="27">HS/IBG</strain>
        <strain evidence="27">LP/J</strain>
        <strain evidence="27">LS/IBG</strain>
        <strain evidence="26">MA/M4J</strain>
        <strain evidence="18">PL/J</strain>
        <strain evidence="27">RF/J</strain>
        <strain evidence="18">Sencar</strain>
        <strain evidence="27">SJL/J</strain>
        <strain evidence="27">SM/J</strain>
        <strain evidence="27">ST/J</strain>
        <strain evidence="27">SWR/J</strain>
        <tissue evidence="18">Lung</tissue>
    </source>
</reference>
<reference evidence="23 28" key="5">
    <citation type="journal article" date="1999" name="Proc. Natl. Acad. Sci. U.S.A.">
        <title>Induction of ARF tumor suppressor gene expression and cell cycle arrest by transcription factor DMP1.</title>
        <authorList>
            <person name="Inoue K."/>
            <person name="Roussel M.F."/>
            <person name="Sherr C.J."/>
        </authorList>
    </citation>
    <scope>NUCLEOTIDE SEQUENCE [GENOMIC DNA] OF 1-63</scope>
    <source>
        <strain evidence="28">129/SvjE</strain>
    </source>
</reference>
<reference evidence="23" key="6">
    <citation type="journal article" date="1997" name="Cell">
        <title>Tumor suppression at the mouse INK4a locus mediated by the alternative reading frame product p19ARF.</title>
        <authorList>
            <person name="Kamijo T."/>
            <person name="Zindy F."/>
            <person name="Roussel M.F."/>
            <person name="Quelle D.E."/>
            <person name="Downing J.R."/>
            <person name="Ashmun R.A."/>
            <person name="Grosveld G."/>
            <person name="Sherr C.J."/>
        </authorList>
    </citation>
    <scope>FUNCTION</scope>
</reference>
<reference evidence="23" key="7">
    <citation type="journal article" date="1997" name="Proc. Natl. Acad. Sci. U.S.A.">
        <title>Cancer-associated mutations at the INK4a locus cancel cell cycle arrest by p16INK4a but not by the alternative reading frame protein p19ARF.</title>
        <authorList>
            <person name="Quelle D.E."/>
            <person name="Cheng M."/>
            <person name="Ashmun R.A."/>
            <person name="Sherr C.J."/>
        </authorList>
    </citation>
    <scope>MUTAGENESIS OF LEU-85; PRO-93; ARG-97; 105-GLY-HIS-106 AND ALA-120</scope>
</reference>
<reference evidence="23" key="8">
    <citation type="journal article" date="1998" name="Cell">
        <title>The Ink4a tumor suppressor gene product, p19Arf, interacts with MDM2 and neutralizes MDM2's inhibition of p53.</title>
        <authorList>
            <person name="Pomerantz J."/>
            <person name="Schreiber-Agus N."/>
            <person name="Liegeois N.J."/>
            <person name="Silverman A."/>
            <person name="Alland L."/>
            <person name="Chin L."/>
            <person name="Potes J."/>
            <person name="Chen K."/>
            <person name="Orlow I."/>
            <person name="Lee H.-W."/>
            <person name="Cordon-Cardo C."/>
            <person name="DePinho R.A."/>
        </authorList>
    </citation>
    <scope>FUNCTION</scope>
    <scope>INTERACTION WITH MDM2</scope>
</reference>
<reference evidence="23" key="9">
    <citation type="journal article" date="1999" name="Proc. Natl. Acad. Sci. U.S.A.">
        <title>P19(ARF) stabilizes p53 by blocking nucleo-cytoplasmic shuttling of Mdm2.</title>
        <authorList>
            <person name="Tao W."/>
            <person name="Levine A.J."/>
        </authorList>
    </citation>
    <scope>FUNCTION</scope>
    <scope>SUBCELLULAR LOCATION</scope>
</reference>
<reference key="10">
    <citation type="journal article" date="2000" name="Genes Dev.">
        <title>Disruption of the ARF transcriptional activator DMP1 facilitates cell immortalization, Ras transformation, and tumorigenesis.</title>
        <authorList>
            <person name="Inoue K."/>
            <person name="Wen R."/>
            <person name="Rehg J.E."/>
            <person name="Adachi M."/>
            <person name="Cleveland J.L."/>
            <person name="Roussel M.F."/>
            <person name="Sherr C.J."/>
        </authorList>
    </citation>
    <scope>INDUCTION</scope>
</reference>
<reference key="11">
    <citation type="journal article" date="2002" name="J. Biol. Chem.">
        <title>CARF is a novel protein that cooperates with mouse p19ARF (human p14ARF) in activating p53.</title>
        <authorList>
            <person name="Hasan M.K."/>
            <person name="Yaguchi T."/>
            <person name="Sugihara T."/>
            <person name="Kumar P.K.R."/>
            <person name="Taira K."/>
            <person name="Reddel R.R."/>
            <person name="Kaul S.C."/>
            <person name="Wadhwa R."/>
        </authorList>
    </citation>
    <scope>INTERACTION WITH CDKN2AIP</scope>
</reference>
<reference evidence="23" key="12">
    <citation type="journal article" date="2004" name="Mol. Biol. Cell">
        <title>p19ARF determines the balance between normal cell proliferation rate and apoptosis during mammary gland development.</title>
        <authorList>
            <person name="Yi Y."/>
            <person name="Shepard A."/>
            <person name="Kittrell F."/>
            <person name="Mulac-Jericevic B."/>
            <person name="Medina D."/>
            <person name="Said T.K."/>
        </authorList>
    </citation>
    <scope>DEVELOPMENTAL STAGE</scope>
    <scope>INDUCTION</scope>
    <scope>DISRUPTION PHENOTYPE</scope>
</reference>
<reference evidence="23" key="13">
    <citation type="journal article" date="2004" name="Nature">
        <title>p19ARF directly and differentially controls the functions of c-Myc independently of p53.</title>
        <authorList>
            <person name="Qi Y."/>
            <person name="Gregory M.A."/>
            <person name="Li Z."/>
            <person name="Brousal J.P."/>
            <person name="West K."/>
            <person name="Hann S.R."/>
        </authorList>
    </citation>
    <scope>FUNCTION</scope>
    <scope>INTERACTION WITH MYC</scope>
</reference>
<reference evidence="23" key="14">
    <citation type="journal article" date="2005" name="Biochem. Biophys. Res. Commun.">
        <title>The ARF tumor suppressor inhibits BCL6-mediated transcriptional repression.</title>
        <authorList>
            <person name="Suzuki H."/>
            <person name="Kurita M."/>
            <person name="Mizumoto K."/>
            <person name="Moriyama M."/>
            <person name="Aiso S."/>
            <person name="Nishimoto I."/>
            <person name="Matsuoka M."/>
        </authorList>
    </citation>
    <scope>FUNCTION</scope>
    <scope>SUBCELLULAR LOCATION</scope>
    <scope>INTERACTION WITH BCL6</scope>
</reference>
<reference key="15">
    <citation type="journal article" date="2005" name="Mol. Cell. Biol.">
        <title>Ras-Raf-Arf signaling critically depends on the Dmp1 transcription factor.</title>
        <authorList>
            <person name="Sreeramaneni R."/>
            <person name="Chaudhry A."/>
            <person name="McMahon M."/>
            <person name="Sherr C.J."/>
            <person name="Inoue K."/>
        </authorList>
    </citation>
    <scope>FUNCTION</scope>
    <scope>SUBCELLULAR LOCATION</scope>
    <scope>INDUCTION</scope>
</reference>
<reference key="16">
    <citation type="journal article" date="2006" name="Mol. Cell">
        <title>A short mitochondrial form of p19ARF induces autophagy and caspase-independent cell death.</title>
        <authorList>
            <person name="Reef S."/>
            <person name="Zalckvar E."/>
            <person name="Shifman O."/>
            <person name="Bialik S."/>
            <person name="Sabanay H."/>
            <person name="Oren M."/>
            <person name="Kimchi A."/>
        </authorList>
    </citation>
    <scope>ALTERNATIVE SPLICING (ISOFORM SMARF)</scope>
    <scope>FUNCTION (ISOFORM SMARF)</scope>
    <scope>SUBCELLULAR LOCATION (ISOFORM SMARF)</scope>
</reference>
<reference key="17">
    <citation type="journal article" date="2007" name="Cancer Cell">
        <title>Mutually exclusive inactivation of DMP1 and ARF/p53 in lung cancer.</title>
        <authorList>
            <person name="Mallakin A."/>
            <person name="Sugiyama T."/>
            <person name="Taneja P."/>
            <person name="Matise L.A."/>
            <person name="Frazier D.P."/>
            <person name="Choudhary M."/>
            <person name="Hawkins G.A."/>
            <person name="D'Agostino R.B. Jr."/>
            <person name="Willingham M.C."/>
            <person name="Inoue K."/>
        </authorList>
    </citation>
    <scope>FUNCTION</scope>
</reference>
<reference key="18">
    <citation type="journal article" date="2007" name="J. Biol. Chem.">
        <title>A novel nuclear interactor of ARF and MDM2 (NIAM) that maintains chromosomal stability.</title>
        <authorList>
            <person name="Tompkins V.S."/>
            <person name="Hagen J."/>
            <person name="Frazier A.A."/>
            <person name="Lushnikova T."/>
            <person name="Fitzgerald M.P."/>
            <person name="di Tommaso A.D."/>
            <person name="Ladeveze V."/>
            <person name="Domann F.E."/>
            <person name="Eischen C.M."/>
            <person name="Quelle D.E."/>
        </authorList>
    </citation>
    <scope>INTERACTION WITH TBRG1</scope>
</reference>
<reference key="19">
    <citation type="journal article" date="2007" name="Oncogene">
        <title>The autophagic inducer smARF interacts with and is stabilized by the mitochondrial p32 protein.</title>
        <authorList>
            <person name="Reef S."/>
            <person name="Shifman O."/>
            <person name="Oren M."/>
            <person name="Kimchi A."/>
        </authorList>
    </citation>
    <scope>INTERACTION WITH C1QBP</scope>
</reference>
<reference key="20">
    <citation type="journal article" date="2007" name="Oncogene">
        <title>Repression of Dmp1 and Arf transcription by anthracyclins: critical roles of the NF-kappaB subunit p65.</title>
        <authorList>
            <person name="Taneja P."/>
            <person name="Mallakin A."/>
            <person name="Matise L.A."/>
            <person name="Frazier D.P."/>
            <person name="Choudhary M."/>
            <person name="Inoue K."/>
        </authorList>
    </citation>
    <scope>INDUCTION</scope>
</reference>
<reference key="21">
    <citation type="journal article" date="2010" name="Mol. Cell">
        <title>The ARF tumor suppressor controls ribosome biogenesis by regulating the RNA polymerase I transcription factor TTF-I.</title>
        <authorList>
            <person name="Lessard F."/>
            <person name="Morin F."/>
            <person name="Ivanchuk S."/>
            <person name="Langlois F."/>
            <person name="Stefanovsky V."/>
            <person name="Rutka J."/>
            <person name="Moss T."/>
        </authorList>
    </citation>
    <scope>FUNCTION</scope>
    <scope>INTERACTION WITH TTF1</scope>
    <scope>SUBCELLULAR LOCATION</scope>
</reference>
<reference evidence="23" key="22">
    <citation type="journal article" date="2001" name="Biochemistry">
        <title>Solution structure of the p53 regulatory domain of the p19Arf tumor suppressor protein.</title>
        <authorList>
            <person name="DiGiammarino E.L."/>
            <person name="Filippov I."/>
            <person name="Weber J.D."/>
            <person name="Bothner B."/>
            <person name="Kriwacki R.W."/>
        </authorList>
    </citation>
    <scope>STRUCTURE BY NMR OF 1-37</scope>
</reference>
<proteinExistence type="evidence at protein level"/>
<organism>
    <name type="scientific">Mus musculus</name>
    <name type="common">Mouse</name>
    <dbReference type="NCBI Taxonomy" id="10090"/>
    <lineage>
        <taxon>Eukaryota</taxon>
        <taxon>Metazoa</taxon>
        <taxon>Chordata</taxon>
        <taxon>Craniata</taxon>
        <taxon>Vertebrata</taxon>
        <taxon>Euteleostomi</taxon>
        <taxon>Mammalia</taxon>
        <taxon>Eutheria</taxon>
        <taxon>Euarchontoglires</taxon>
        <taxon>Glires</taxon>
        <taxon>Rodentia</taxon>
        <taxon>Myomorpha</taxon>
        <taxon>Muroidea</taxon>
        <taxon>Muridae</taxon>
        <taxon>Murinae</taxon>
        <taxon>Mus</taxon>
        <taxon>Mus</taxon>
    </lineage>
</organism>
<evidence type="ECO:0000250" key="1">
    <source>
        <dbReference type="UniProtKB" id="Q8N726"/>
    </source>
</evidence>
<evidence type="ECO:0000256" key="2">
    <source>
        <dbReference type="SAM" id="MobiDB-lite"/>
    </source>
</evidence>
<evidence type="ECO:0000269" key="3">
    <source>
    </source>
</evidence>
<evidence type="ECO:0000269" key="4">
    <source>
    </source>
</evidence>
<evidence type="ECO:0000269" key="5">
    <source>
    </source>
</evidence>
<evidence type="ECO:0000269" key="6">
    <source>
    </source>
</evidence>
<evidence type="ECO:0000269" key="7">
    <source>
    </source>
</evidence>
<evidence type="ECO:0000269" key="8">
    <source>
    </source>
</evidence>
<evidence type="ECO:0000269" key="9">
    <source>
    </source>
</evidence>
<evidence type="ECO:0000269" key="10">
    <source>
    </source>
</evidence>
<evidence type="ECO:0000269" key="11">
    <source>
    </source>
</evidence>
<evidence type="ECO:0000269" key="12">
    <source>
    </source>
</evidence>
<evidence type="ECO:0000269" key="13">
    <source>
    </source>
</evidence>
<evidence type="ECO:0000269" key="14">
    <source>
    </source>
</evidence>
<evidence type="ECO:0000269" key="15">
    <source>
    </source>
</evidence>
<evidence type="ECO:0000269" key="16">
    <source>
    </source>
</evidence>
<evidence type="ECO:0000269" key="17">
    <source>
    </source>
</evidence>
<evidence type="ECO:0000269" key="18">
    <source>
    </source>
</evidence>
<evidence type="ECO:0000269" key="19">
    <source>
    </source>
</evidence>
<evidence type="ECO:0000269" key="20">
    <source>
    </source>
</evidence>
<evidence type="ECO:0000303" key="21">
    <source>
    </source>
</evidence>
<evidence type="ECO:0000303" key="22">
    <source>
    </source>
</evidence>
<evidence type="ECO:0000305" key="23"/>
<evidence type="ECO:0000305" key="24">
    <source>
    </source>
</evidence>
<evidence type="ECO:0000312" key="25">
    <source>
        <dbReference type="EMBL" id="AAB35770.1"/>
    </source>
</evidence>
<evidence type="ECO:0000312" key="26">
    <source>
        <dbReference type="EMBL" id="AAC00053.1"/>
    </source>
</evidence>
<evidence type="ECO:0000312" key="27">
    <source>
        <dbReference type="EMBL" id="AAC00054.1"/>
    </source>
</evidence>
<evidence type="ECO:0000312" key="28">
    <source>
        <dbReference type="EMBL" id="AAD33245.1"/>
    </source>
</evidence>
<evidence type="ECO:0000312" key="29">
    <source>
        <dbReference type="EMBL" id="CAB65598.1"/>
    </source>
</evidence>
<evidence type="ECO:0000312" key="30">
    <source>
        <dbReference type="MGI" id="MGI:104738"/>
    </source>
</evidence>
<evidence type="ECO:0007829" key="31">
    <source>
        <dbReference type="PDB" id="1HN3"/>
    </source>
</evidence>
<dbReference type="EMBL" id="L76092">
    <property type="protein sequence ID" value="AAC42080.1"/>
    <property type="molecule type" value="mRNA"/>
</dbReference>
<dbReference type="EMBL" id="BC058190">
    <property type="protein sequence ID" value="AAH58190.3"/>
    <property type="molecule type" value="mRNA"/>
</dbReference>
<dbReference type="EMBL" id="S80650">
    <property type="protein sequence ID" value="AAB35770.1"/>
    <property type="molecule type" value="mRNA"/>
</dbReference>
<dbReference type="EMBL" id="AJ238890">
    <property type="protein sequence ID" value="CAB65598.1"/>
    <property type="molecule type" value="Genomic_DNA"/>
</dbReference>
<dbReference type="EMBL" id="U49281">
    <property type="protein sequence ID" value="AAC00053.1"/>
    <property type="molecule type" value="Genomic_DNA"/>
</dbReference>
<dbReference type="EMBL" id="U49282">
    <property type="protein sequence ID" value="AAC00054.1"/>
    <property type="molecule type" value="Genomic_DNA"/>
</dbReference>
<dbReference type="EMBL" id="AF120108">
    <property type="protein sequence ID" value="AAD33245.1"/>
    <property type="molecule type" value="Genomic_DNA"/>
</dbReference>
<dbReference type="CCDS" id="CCDS18350.1">
    <molecule id="Q64364-1"/>
</dbReference>
<dbReference type="RefSeq" id="NP_034007.1">
    <molecule id="Q64364-1"/>
    <property type="nucleotide sequence ID" value="NM_009877.2"/>
</dbReference>
<dbReference type="PDB" id="1HN3">
    <property type="method" value="NMR"/>
    <property type="chains" value="A=1-37"/>
</dbReference>
<dbReference type="PDBsum" id="1HN3"/>
<dbReference type="SMR" id="Q64364"/>
<dbReference type="BioGRID" id="198654">
    <property type="interactions" value="46"/>
</dbReference>
<dbReference type="CORUM" id="Q64364"/>
<dbReference type="DIP" id="DIP-24169N"/>
<dbReference type="FunCoup" id="Q64364">
    <property type="interactions" value="223"/>
</dbReference>
<dbReference type="IntAct" id="Q64364">
    <property type="interactions" value="11"/>
</dbReference>
<dbReference type="STRING" id="10090.ENSMUSP00000102748"/>
<dbReference type="GlyGen" id="Q64364">
    <property type="glycosylation" value="1 site, 1 O-linked glycan (1 site)"/>
</dbReference>
<dbReference type="iPTMnet" id="Q64364"/>
<dbReference type="PhosphoSitePlus" id="Q64364"/>
<dbReference type="PaxDb" id="10090-ENSMUSP00000102748"/>
<dbReference type="PeptideAtlas" id="Q64364"/>
<dbReference type="ProteomicsDB" id="282012">
    <molecule id="Q64364-1"/>
</dbReference>
<dbReference type="ProteomicsDB" id="282013">
    <molecule id="Q64364-2"/>
</dbReference>
<dbReference type="DNASU" id="12578"/>
<dbReference type="Ensembl" id="ENSMUST00000107131.2">
    <molecule id="Q64364-1"/>
    <property type="protein sequence ID" value="ENSMUSP00000102748.3"/>
    <property type="gene ID" value="ENSMUSG00000044303.7"/>
</dbReference>
<dbReference type="GeneID" id="12578"/>
<dbReference type="UCSC" id="uc008toi.1">
    <molecule id="Q64364-1"/>
    <property type="organism name" value="mouse"/>
</dbReference>
<dbReference type="AGR" id="MGI:104738"/>
<dbReference type="CTD" id="1029"/>
<dbReference type="MGI" id="MGI:104738">
    <property type="gene designation" value="Cdkn2a"/>
</dbReference>
<dbReference type="VEuPathDB" id="HostDB:ENSMUSG00000044303"/>
<dbReference type="eggNOG" id="ENOG502T9HM">
    <property type="taxonomic scope" value="Eukaryota"/>
</dbReference>
<dbReference type="GeneTree" id="ENSGT00940000168083"/>
<dbReference type="HOGENOM" id="CLU_134503_0_0_1"/>
<dbReference type="InParanoid" id="Q64364"/>
<dbReference type="OrthoDB" id="10410151at2759"/>
<dbReference type="PhylomeDB" id="Q64364"/>
<dbReference type="BioGRID-ORCS" id="12578">
    <property type="hits" value="5 hits in 77 CRISPR screens"/>
</dbReference>
<dbReference type="ChiTaRS" id="Cdkn2a">
    <property type="organism name" value="mouse"/>
</dbReference>
<dbReference type="EvolutionaryTrace" id="Q64364"/>
<dbReference type="Proteomes" id="UP000000589">
    <property type="component" value="Chromosome 4"/>
</dbReference>
<dbReference type="RNAct" id="Q64364">
    <property type="molecule type" value="protein"/>
</dbReference>
<dbReference type="Bgee" id="ENSMUSG00000044303">
    <property type="expression patterns" value="Expressed in yolk sac and 55 other cell types or tissues"/>
</dbReference>
<dbReference type="ExpressionAtlas" id="Q64364">
    <property type="expression patterns" value="baseline and differential"/>
</dbReference>
<dbReference type="GO" id="GO:0005737">
    <property type="term" value="C:cytoplasm"/>
    <property type="evidence" value="ECO:0000314"/>
    <property type="project" value="MGI"/>
</dbReference>
<dbReference type="GO" id="GO:0001652">
    <property type="term" value="C:granular component"/>
    <property type="evidence" value="ECO:0000314"/>
    <property type="project" value="BHF-UCL"/>
</dbReference>
<dbReference type="GO" id="GO:0005739">
    <property type="term" value="C:mitochondrion"/>
    <property type="evidence" value="ECO:0007669"/>
    <property type="project" value="UniProtKB-SubCell"/>
</dbReference>
<dbReference type="GO" id="GO:0005730">
    <property type="term" value="C:nucleolus"/>
    <property type="evidence" value="ECO:0000314"/>
    <property type="project" value="MGI"/>
</dbReference>
<dbReference type="GO" id="GO:0005654">
    <property type="term" value="C:nucleoplasm"/>
    <property type="evidence" value="ECO:0007669"/>
    <property type="project" value="UniProtKB-SubCell"/>
</dbReference>
<dbReference type="GO" id="GO:0032991">
    <property type="term" value="C:protein-containing complex"/>
    <property type="evidence" value="ECO:0000315"/>
    <property type="project" value="CAFA"/>
</dbReference>
<dbReference type="GO" id="GO:0004861">
    <property type="term" value="F:cyclin-dependent protein serine/threonine kinase inhibitor activity"/>
    <property type="evidence" value="ECO:0000314"/>
    <property type="project" value="MGI"/>
</dbReference>
<dbReference type="GO" id="GO:0003677">
    <property type="term" value="F:DNA binding"/>
    <property type="evidence" value="ECO:0007669"/>
    <property type="project" value="UniProtKB-KW"/>
</dbReference>
<dbReference type="GO" id="GO:0001228">
    <property type="term" value="F:DNA-binding transcription activator activity, RNA polymerase II-specific"/>
    <property type="evidence" value="ECO:0000315"/>
    <property type="project" value="BHF-UCL"/>
</dbReference>
<dbReference type="GO" id="GO:0140297">
    <property type="term" value="F:DNA-binding transcription factor binding"/>
    <property type="evidence" value="ECO:0000353"/>
    <property type="project" value="UniProtKB"/>
</dbReference>
<dbReference type="GO" id="GO:0097371">
    <property type="term" value="F:MDM2/MDM4 family protein binding"/>
    <property type="evidence" value="ECO:0000353"/>
    <property type="project" value="CAFA"/>
</dbReference>
<dbReference type="GO" id="GO:0055105">
    <property type="term" value="F:ubiquitin-protein transferase inhibitor activity"/>
    <property type="evidence" value="ECO:0000314"/>
    <property type="project" value="BHF-UCL"/>
</dbReference>
<dbReference type="GO" id="GO:0060057">
    <property type="term" value="P:apoptotic process involved in mammary gland involution"/>
    <property type="evidence" value="ECO:0000315"/>
    <property type="project" value="MGI"/>
</dbReference>
<dbReference type="GO" id="GO:0071480">
    <property type="term" value="P:cellular response to gamma radiation"/>
    <property type="evidence" value="ECO:0000315"/>
    <property type="project" value="BHF-UCL"/>
</dbReference>
<dbReference type="GO" id="GO:0070301">
    <property type="term" value="P:cellular response to hydrogen peroxide"/>
    <property type="evidence" value="ECO:0000314"/>
    <property type="project" value="MGI"/>
</dbReference>
<dbReference type="GO" id="GO:0090398">
    <property type="term" value="P:cellular senescence"/>
    <property type="evidence" value="ECO:0000314"/>
    <property type="project" value="MGI"/>
</dbReference>
<dbReference type="GO" id="GO:0008544">
    <property type="term" value="P:epidermis development"/>
    <property type="evidence" value="ECO:0000315"/>
    <property type="project" value="MGI"/>
</dbReference>
<dbReference type="GO" id="GO:0042593">
    <property type="term" value="P:glucose homeostasis"/>
    <property type="evidence" value="ECO:0000315"/>
    <property type="project" value="MGI"/>
</dbReference>
<dbReference type="GO" id="GO:0030216">
    <property type="term" value="P:keratinocyte differentiation"/>
    <property type="evidence" value="ECO:0000316"/>
    <property type="project" value="MGI"/>
</dbReference>
<dbReference type="GO" id="GO:0043616">
    <property type="term" value="P:keratinocyte proliferation"/>
    <property type="evidence" value="ECO:0000316"/>
    <property type="project" value="MGI"/>
</dbReference>
<dbReference type="GO" id="GO:0033598">
    <property type="term" value="P:mammary gland epithelial cell proliferation"/>
    <property type="evidence" value="ECO:0000315"/>
    <property type="project" value="MGI"/>
</dbReference>
<dbReference type="GO" id="GO:0030889">
    <property type="term" value="P:negative regulation of B cell proliferation"/>
    <property type="evidence" value="ECO:0000315"/>
    <property type="project" value="HGNC-UCL"/>
</dbReference>
<dbReference type="GO" id="GO:0045786">
    <property type="term" value="P:negative regulation of cell cycle"/>
    <property type="evidence" value="ECO:0000314"/>
    <property type="project" value="MGI"/>
</dbReference>
<dbReference type="GO" id="GO:0030308">
    <property type="term" value="P:negative regulation of cell growth"/>
    <property type="evidence" value="ECO:0000315"/>
    <property type="project" value="BHF-UCL"/>
</dbReference>
<dbReference type="GO" id="GO:0033088">
    <property type="term" value="P:negative regulation of immature T cell proliferation in thymus"/>
    <property type="evidence" value="ECO:0000315"/>
    <property type="project" value="HGNC-UCL"/>
</dbReference>
<dbReference type="GO" id="GO:0033600">
    <property type="term" value="P:negative regulation of mammary gland epithelial cell proliferation"/>
    <property type="evidence" value="ECO:0000315"/>
    <property type="project" value="MGI"/>
</dbReference>
<dbReference type="GO" id="GO:0051898">
    <property type="term" value="P:negative regulation of phosphatidylinositol 3-kinase/protein kinase B signal transduction"/>
    <property type="evidence" value="ECO:0000315"/>
    <property type="project" value="BHF-UCL"/>
</dbReference>
<dbReference type="GO" id="GO:1904750">
    <property type="term" value="P:negative regulation of protein localization to nucleolus"/>
    <property type="evidence" value="ECO:0000314"/>
    <property type="project" value="UniProtKB"/>
</dbReference>
<dbReference type="GO" id="GO:1903051">
    <property type="term" value="P:negative regulation of proteolysis involved in protein catabolic process"/>
    <property type="evidence" value="ECO:0000314"/>
    <property type="project" value="MGI"/>
</dbReference>
<dbReference type="GO" id="GO:0090071">
    <property type="term" value="P:negative regulation of ribosome biogenesis"/>
    <property type="evidence" value="ECO:0000314"/>
    <property type="project" value="UniProtKB"/>
</dbReference>
<dbReference type="GO" id="GO:2000059">
    <property type="term" value="P:negative regulation of ubiquitin-dependent protein catabolic process"/>
    <property type="evidence" value="ECO:0000314"/>
    <property type="project" value="MGI"/>
</dbReference>
<dbReference type="GO" id="GO:0051444">
    <property type="term" value="P:negative regulation of ubiquitin-protein transferase activity"/>
    <property type="evidence" value="ECO:0000314"/>
    <property type="project" value="BHF-UCL"/>
</dbReference>
<dbReference type="GO" id="GO:0090402">
    <property type="term" value="P:oncogene-induced cell senescence"/>
    <property type="evidence" value="ECO:0000315"/>
    <property type="project" value="MGI"/>
</dbReference>
<dbReference type="GO" id="GO:0043065">
    <property type="term" value="P:positive regulation of apoptotic process"/>
    <property type="evidence" value="ECO:0000250"/>
    <property type="project" value="UniProtKB"/>
</dbReference>
<dbReference type="GO" id="GO:0060058">
    <property type="term" value="P:positive regulation of apoptotic process involved in mammary gland involution"/>
    <property type="evidence" value="ECO:0000315"/>
    <property type="project" value="MGI"/>
</dbReference>
<dbReference type="GO" id="GO:0043517">
    <property type="term" value="P:positive regulation of DNA damage response, signal transduction by p53 class mediator"/>
    <property type="evidence" value="ECO:0000305"/>
    <property type="project" value="BHF-UCL"/>
</dbReference>
<dbReference type="GO" id="GO:0045944">
    <property type="term" value="P:positive regulation of transcription by RNA polymerase II"/>
    <property type="evidence" value="ECO:0000315"/>
    <property type="project" value="BHF-UCL"/>
</dbReference>
<dbReference type="GO" id="GO:0070534">
    <property type="term" value="P:protein K63-linked ubiquitination"/>
    <property type="evidence" value="ECO:0000250"/>
    <property type="project" value="UniProtKB"/>
</dbReference>
<dbReference type="GO" id="GO:0000209">
    <property type="term" value="P:protein polyubiquitination"/>
    <property type="evidence" value="ECO:0000250"/>
    <property type="project" value="UniProtKB"/>
</dbReference>
<dbReference type="GO" id="GO:0051726">
    <property type="term" value="P:regulation of cell cycle"/>
    <property type="evidence" value="ECO:0000314"/>
    <property type="project" value="MGI"/>
</dbReference>
<dbReference type="GO" id="GO:0010468">
    <property type="term" value="P:regulation of gene expression"/>
    <property type="evidence" value="ECO:0000315"/>
    <property type="project" value="MGI"/>
</dbReference>
<dbReference type="GO" id="GO:0046822">
    <property type="term" value="P:regulation of nucleocytoplasmic transport"/>
    <property type="evidence" value="ECO:0000316"/>
    <property type="project" value="MGI"/>
</dbReference>
<dbReference type="GO" id="GO:0031647">
    <property type="term" value="P:regulation of protein stability"/>
    <property type="evidence" value="ECO:0000315"/>
    <property type="project" value="BHF-UCL"/>
</dbReference>
<dbReference type="GO" id="GO:0006364">
    <property type="term" value="P:rRNA processing"/>
    <property type="evidence" value="ECO:0007669"/>
    <property type="project" value="UniProtKB-KW"/>
</dbReference>
<dbReference type="GO" id="GO:0009303">
    <property type="term" value="P:rRNA transcription"/>
    <property type="evidence" value="ECO:0000316"/>
    <property type="project" value="MGI"/>
</dbReference>
<dbReference type="GO" id="GO:0048103">
    <property type="term" value="P:somatic stem cell division"/>
    <property type="evidence" value="ECO:0000315"/>
    <property type="project" value="HGNC-UCL"/>
</dbReference>
<dbReference type="GO" id="GO:0035019">
    <property type="term" value="P:somatic stem cell population maintenance"/>
    <property type="evidence" value="ECO:0000316"/>
    <property type="project" value="MGI"/>
</dbReference>
<dbReference type="DisProt" id="DP00335"/>
<dbReference type="Gene3D" id="6.10.250.60">
    <property type="match status" value="1"/>
</dbReference>
<dbReference type="IDEAL" id="IID50036"/>
<dbReference type="InterPro" id="IPR010868">
    <property type="entry name" value="Tumor_suppres_ARF"/>
</dbReference>
<dbReference type="Pfam" id="PF07392">
    <property type="entry name" value="P19Arf_N"/>
    <property type="match status" value="1"/>
</dbReference>